<organism>
    <name type="scientific">Schizosaccharomyces pombe (strain 972 / ATCC 24843)</name>
    <name type="common">Fission yeast</name>
    <dbReference type="NCBI Taxonomy" id="284812"/>
    <lineage>
        <taxon>Eukaryota</taxon>
        <taxon>Fungi</taxon>
        <taxon>Dikarya</taxon>
        <taxon>Ascomycota</taxon>
        <taxon>Taphrinomycotina</taxon>
        <taxon>Schizosaccharomycetes</taxon>
        <taxon>Schizosaccharomycetales</taxon>
        <taxon>Schizosaccharomycetaceae</taxon>
        <taxon>Schizosaccharomyces</taxon>
    </lineage>
</organism>
<reference key="1">
    <citation type="journal article" date="2002" name="Nature">
        <title>The genome sequence of Schizosaccharomyces pombe.</title>
        <authorList>
            <person name="Wood V."/>
            <person name="Gwilliam R."/>
            <person name="Rajandream M.A."/>
            <person name="Lyne M.H."/>
            <person name="Lyne R."/>
            <person name="Stewart A."/>
            <person name="Sgouros J.G."/>
            <person name="Peat N."/>
            <person name="Hayles J."/>
            <person name="Baker S.G."/>
            <person name="Basham D."/>
            <person name="Bowman S."/>
            <person name="Brooks K."/>
            <person name="Brown D."/>
            <person name="Brown S."/>
            <person name="Chillingworth T."/>
            <person name="Churcher C.M."/>
            <person name="Collins M."/>
            <person name="Connor R."/>
            <person name="Cronin A."/>
            <person name="Davis P."/>
            <person name="Feltwell T."/>
            <person name="Fraser A."/>
            <person name="Gentles S."/>
            <person name="Goble A."/>
            <person name="Hamlin N."/>
            <person name="Harris D.E."/>
            <person name="Hidalgo J."/>
            <person name="Hodgson G."/>
            <person name="Holroyd S."/>
            <person name="Hornsby T."/>
            <person name="Howarth S."/>
            <person name="Huckle E.J."/>
            <person name="Hunt S."/>
            <person name="Jagels K."/>
            <person name="James K.D."/>
            <person name="Jones L."/>
            <person name="Jones M."/>
            <person name="Leather S."/>
            <person name="McDonald S."/>
            <person name="McLean J."/>
            <person name="Mooney P."/>
            <person name="Moule S."/>
            <person name="Mungall K.L."/>
            <person name="Murphy L.D."/>
            <person name="Niblett D."/>
            <person name="Odell C."/>
            <person name="Oliver K."/>
            <person name="O'Neil S."/>
            <person name="Pearson D."/>
            <person name="Quail M.A."/>
            <person name="Rabbinowitsch E."/>
            <person name="Rutherford K.M."/>
            <person name="Rutter S."/>
            <person name="Saunders D."/>
            <person name="Seeger K."/>
            <person name="Sharp S."/>
            <person name="Skelton J."/>
            <person name="Simmonds M.N."/>
            <person name="Squares R."/>
            <person name="Squares S."/>
            <person name="Stevens K."/>
            <person name="Taylor K."/>
            <person name="Taylor R.G."/>
            <person name="Tivey A."/>
            <person name="Walsh S.V."/>
            <person name="Warren T."/>
            <person name="Whitehead S."/>
            <person name="Woodward J.R."/>
            <person name="Volckaert G."/>
            <person name="Aert R."/>
            <person name="Robben J."/>
            <person name="Grymonprez B."/>
            <person name="Weltjens I."/>
            <person name="Vanstreels E."/>
            <person name="Rieger M."/>
            <person name="Schaefer M."/>
            <person name="Mueller-Auer S."/>
            <person name="Gabel C."/>
            <person name="Fuchs M."/>
            <person name="Duesterhoeft A."/>
            <person name="Fritzc C."/>
            <person name="Holzer E."/>
            <person name="Moestl D."/>
            <person name="Hilbert H."/>
            <person name="Borzym K."/>
            <person name="Langer I."/>
            <person name="Beck A."/>
            <person name="Lehrach H."/>
            <person name="Reinhardt R."/>
            <person name="Pohl T.M."/>
            <person name="Eger P."/>
            <person name="Zimmermann W."/>
            <person name="Wedler H."/>
            <person name="Wambutt R."/>
            <person name="Purnelle B."/>
            <person name="Goffeau A."/>
            <person name="Cadieu E."/>
            <person name="Dreano S."/>
            <person name="Gloux S."/>
            <person name="Lelaure V."/>
            <person name="Mottier S."/>
            <person name="Galibert F."/>
            <person name="Aves S.J."/>
            <person name="Xiang Z."/>
            <person name="Hunt C."/>
            <person name="Moore K."/>
            <person name="Hurst S.M."/>
            <person name="Lucas M."/>
            <person name="Rochet M."/>
            <person name="Gaillardin C."/>
            <person name="Tallada V.A."/>
            <person name="Garzon A."/>
            <person name="Thode G."/>
            <person name="Daga R.R."/>
            <person name="Cruzado L."/>
            <person name="Jimenez J."/>
            <person name="Sanchez M."/>
            <person name="del Rey F."/>
            <person name="Benito J."/>
            <person name="Dominguez A."/>
            <person name="Revuelta J.L."/>
            <person name="Moreno S."/>
            <person name="Armstrong J."/>
            <person name="Forsburg S.L."/>
            <person name="Cerutti L."/>
            <person name="Lowe T."/>
            <person name="McCombie W.R."/>
            <person name="Paulsen I."/>
            <person name="Potashkin J."/>
            <person name="Shpakovski G.V."/>
            <person name="Ussery D."/>
            <person name="Barrell B.G."/>
            <person name="Nurse P."/>
        </authorList>
    </citation>
    <scope>NUCLEOTIDE SEQUENCE [LARGE SCALE GENOMIC DNA]</scope>
    <source>
        <strain>972 / ATCC 24843</strain>
    </source>
</reference>
<reference key="2">
    <citation type="journal article" date="2006" name="Nat. Biotechnol.">
        <title>ORFeome cloning and global analysis of protein localization in the fission yeast Schizosaccharomyces pombe.</title>
        <authorList>
            <person name="Matsuyama A."/>
            <person name="Arai R."/>
            <person name="Yashiroda Y."/>
            <person name="Shirai A."/>
            <person name="Kamata A."/>
            <person name="Sekido S."/>
            <person name="Kobayashi Y."/>
            <person name="Hashimoto A."/>
            <person name="Hamamoto M."/>
            <person name="Hiraoka Y."/>
            <person name="Horinouchi S."/>
            <person name="Yoshida M."/>
        </authorList>
    </citation>
    <scope>SUBCELLULAR LOCATION [LARGE SCALE ANALYSIS]</scope>
</reference>
<gene>
    <name type="ORF">SPAC20G8.02</name>
</gene>
<sequence>MILYIVLPFYVRTKPYSILPSYSSLQWITNAWCSLPSIYILCHCSKHQEEITILALKPLIAMNNSEEWPLKHVQPPKLSFRHLLSRSVTDAPSLRVRWFYAVDRPLRKSRTGPTEIKKAKNFLPFSAEDSEHIEKSYLKAVENDGQSEPVNVNEDYLYSVNVVSRELSPIYWDGPVYRILRGTWFFSRGDKLYPCEENLATQVEEGYLNSCPYREFSNEKDSAAAQSKTWALLGRYTGGFVQYTGSRNARLVYDDFYRNVSVKIMNRFSPASFHRSDKLVRGYELDMLESNSKPSTPVPTEELTSTTLLNDSSDPSDNFTPSNTESTIDLPSATDASHLMSRPDREVNHLILCCHGIGQKMGERVETVSFVKDISNFRKTLKKTFNSSPDLQAVYPKLKGGGNGVQCLPLLWRQDIRFGMARDLDSSFADDDDDDDESLNMSRDLALDDLEDDSIPTLDNINIPTVTGLRNIISDVLLDVLLYCQPNYRDKILAAVVKRLNRLYNLYKKNVPSFNGHVSLLGHSLGALILFDIIRYQGNIKYSKLQLDFPVANFFALGSPLGLFQMLNGKKIAGPIPKTNLTRSLSYSEQSFDSGVSILSCQNFYNIFHPTDPISYRVEPLVVKQMARLKPQKISHFRPHQDLSSSGVGHKIAGGALNVLSGLRSGIANTLILKSLSYASVFNEATADSHDESQGAENIRDWHIDERMYRLNKTGRIDFMLQEGALDTSYSYVSAMNAHSEYWKNVDLAHFILTQLL</sequence>
<keyword id="KW-0378">Hydrolase</keyword>
<keyword id="KW-0442">Lipid degradation</keyword>
<keyword id="KW-0443">Lipid metabolism</keyword>
<keyword id="KW-0496">Mitochondrion</keyword>
<keyword id="KW-1185">Reference proteome</keyword>
<keyword id="KW-0809">Transit peptide</keyword>
<feature type="transit peptide" description="Mitochondrion" evidence="2">
    <location>
        <begin position="1"/>
        <end position="13"/>
    </location>
</feature>
<feature type="chain" id="PRO_0000316026" description="Probable phospholipase C20G8.02, mitochondrial">
    <location>
        <begin position="14"/>
        <end position="757"/>
    </location>
</feature>
<feature type="domain" description="DDHD" evidence="3">
    <location>
        <begin position="547"/>
        <end position="757"/>
    </location>
</feature>
<feature type="region of interest" description="Disordered" evidence="4">
    <location>
        <begin position="289"/>
        <end position="330"/>
    </location>
</feature>
<feature type="compositionally biased region" description="Polar residues" evidence="4">
    <location>
        <begin position="302"/>
        <end position="329"/>
    </location>
</feature>
<feature type="active site" evidence="1">
    <location>
        <position position="524"/>
    </location>
</feature>
<name>YDK2_SCHPO</name>
<accession>P87109</accession>
<proteinExistence type="inferred from homology"/>
<dbReference type="EMBL" id="CU329670">
    <property type="protein sequence ID" value="CAB08596.1"/>
    <property type="molecule type" value="Genomic_DNA"/>
</dbReference>
<dbReference type="PIR" id="T38124">
    <property type="entry name" value="T38124"/>
</dbReference>
<dbReference type="RefSeq" id="NP_593319.1">
    <property type="nucleotide sequence ID" value="NM_001018750.2"/>
</dbReference>
<dbReference type="FunCoup" id="P87109">
    <property type="interactions" value="508"/>
</dbReference>
<dbReference type="iPTMnet" id="P87109"/>
<dbReference type="PaxDb" id="4896-SPAC20G8.02.1"/>
<dbReference type="EnsemblFungi" id="SPAC20G8.02.1">
    <property type="protein sequence ID" value="SPAC20G8.02.1:pep"/>
    <property type="gene ID" value="SPAC20G8.02"/>
</dbReference>
<dbReference type="KEGG" id="spo:2541976"/>
<dbReference type="PomBase" id="SPAC20G8.02"/>
<dbReference type="VEuPathDB" id="FungiDB:SPAC20G8.02"/>
<dbReference type="eggNOG" id="KOG2308">
    <property type="taxonomic scope" value="Eukaryota"/>
</dbReference>
<dbReference type="HOGENOM" id="CLU_007365_1_0_1"/>
<dbReference type="InParanoid" id="P87109"/>
<dbReference type="OMA" id="HIQRGYS"/>
<dbReference type="PhylomeDB" id="P87109"/>
<dbReference type="Reactome" id="R-SPO-1483166">
    <property type="pathway name" value="Synthesis of PA"/>
</dbReference>
<dbReference type="Reactome" id="R-SPO-1483226">
    <property type="pathway name" value="Synthesis of PI"/>
</dbReference>
<dbReference type="Reactome" id="R-SPO-204005">
    <property type="pathway name" value="COPII-mediated vesicle transport"/>
</dbReference>
<dbReference type="PRO" id="PR:P87109"/>
<dbReference type="Proteomes" id="UP000002485">
    <property type="component" value="Chromosome I"/>
</dbReference>
<dbReference type="GO" id="GO:0005737">
    <property type="term" value="C:cytoplasm"/>
    <property type="evidence" value="ECO:0000318"/>
    <property type="project" value="GO_Central"/>
</dbReference>
<dbReference type="GO" id="GO:0005739">
    <property type="term" value="C:mitochondrion"/>
    <property type="evidence" value="ECO:0007005"/>
    <property type="project" value="PomBase"/>
</dbReference>
<dbReference type="GO" id="GO:0046872">
    <property type="term" value="F:metal ion binding"/>
    <property type="evidence" value="ECO:0000255"/>
    <property type="project" value="PomBase"/>
</dbReference>
<dbReference type="GO" id="GO:0004620">
    <property type="term" value="F:phospholipase activity"/>
    <property type="evidence" value="ECO:0000318"/>
    <property type="project" value="GO_Central"/>
</dbReference>
<dbReference type="GO" id="GO:0016042">
    <property type="term" value="P:lipid catabolic process"/>
    <property type="evidence" value="ECO:0000305"/>
    <property type="project" value="PomBase"/>
</dbReference>
<dbReference type="InterPro" id="IPR029058">
    <property type="entry name" value="AB_hydrolase_fold"/>
</dbReference>
<dbReference type="InterPro" id="IPR004177">
    <property type="entry name" value="DDHD_dom"/>
</dbReference>
<dbReference type="InterPro" id="IPR055555">
    <property type="entry name" value="PA-PLA1_DUF7131"/>
</dbReference>
<dbReference type="PANTHER" id="PTHR23509:SF10">
    <property type="entry name" value="LD21067P"/>
    <property type="match status" value="1"/>
</dbReference>
<dbReference type="PANTHER" id="PTHR23509">
    <property type="entry name" value="PA-PL1 PHOSPHOLIPASE FAMILY"/>
    <property type="match status" value="1"/>
</dbReference>
<dbReference type="Pfam" id="PF02862">
    <property type="entry name" value="DDHD"/>
    <property type="match status" value="2"/>
</dbReference>
<dbReference type="Pfam" id="PF23465">
    <property type="entry name" value="DUF7131"/>
    <property type="match status" value="1"/>
</dbReference>
<dbReference type="Pfam" id="PF23463">
    <property type="entry name" value="WWE_2"/>
    <property type="match status" value="1"/>
</dbReference>
<dbReference type="SMART" id="SM01127">
    <property type="entry name" value="DDHD"/>
    <property type="match status" value="1"/>
</dbReference>
<dbReference type="SUPFAM" id="SSF53474">
    <property type="entry name" value="alpha/beta-Hydrolases"/>
    <property type="match status" value="1"/>
</dbReference>
<dbReference type="PROSITE" id="PS51043">
    <property type="entry name" value="DDHD"/>
    <property type="match status" value="1"/>
</dbReference>
<dbReference type="PROSITE" id="PS00120">
    <property type="entry name" value="LIPASE_SER"/>
    <property type="match status" value="1"/>
</dbReference>
<comment type="function">
    <text evidence="1">Probable phospholipase that hydrolyzes phosphatidic acid.</text>
</comment>
<comment type="subcellular location">
    <subcellularLocation>
        <location evidence="5">Mitochondrion</location>
    </subcellularLocation>
</comment>
<comment type="similarity">
    <text evidence="6">Belongs to the PA-PLA1 family.</text>
</comment>
<protein>
    <recommendedName>
        <fullName>Probable phospholipase C20G8.02, mitochondrial</fullName>
    </recommendedName>
</protein>
<evidence type="ECO:0000250" key="1"/>
<evidence type="ECO:0000255" key="2"/>
<evidence type="ECO:0000255" key="3">
    <source>
        <dbReference type="PROSITE-ProRule" id="PRU00378"/>
    </source>
</evidence>
<evidence type="ECO:0000256" key="4">
    <source>
        <dbReference type="SAM" id="MobiDB-lite"/>
    </source>
</evidence>
<evidence type="ECO:0000269" key="5">
    <source>
    </source>
</evidence>
<evidence type="ECO:0000305" key="6"/>